<name>Y3634_SHEB5</name>
<feature type="chain" id="PRO_1000061739" description="PKHD-type hydroxylase Sbal_3634">
    <location>
        <begin position="1"/>
        <end position="224"/>
    </location>
</feature>
<feature type="domain" description="Fe2OG dioxygenase" evidence="1">
    <location>
        <begin position="78"/>
        <end position="176"/>
    </location>
</feature>
<feature type="binding site" evidence="1">
    <location>
        <position position="96"/>
    </location>
    <ligand>
        <name>Fe cation</name>
        <dbReference type="ChEBI" id="CHEBI:24875"/>
    </ligand>
</feature>
<feature type="binding site" evidence="1">
    <location>
        <position position="98"/>
    </location>
    <ligand>
        <name>Fe cation</name>
        <dbReference type="ChEBI" id="CHEBI:24875"/>
    </ligand>
</feature>
<feature type="binding site" evidence="1">
    <location>
        <position position="157"/>
    </location>
    <ligand>
        <name>Fe cation</name>
        <dbReference type="ChEBI" id="CHEBI:24875"/>
    </ligand>
</feature>
<feature type="binding site" evidence="1">
    <location>
        <position position="167"/>
    </location>
    <ligand>
        <name>2-oxoglutarate</name>
        <dbReference type="ChEBI" id="CHEBI:16810"/>
    </ligand>
</feature>
<feature type="strand" evidence="2">
    <location>
        <begin position="2"/>
        <end position="5"/>
    </location>
</feature>
<feature type="helix" evidence="2">
    <location>
        <begin position="11"/>
        <end position="22"/>
    </location>
</feature>
<feature type="strand" evidence="2">
    <location>
        <begin position="27"/>
        <end position="29"/>
    </location>
</feature>
<feature type="strand" evidence="2">
    <location>
        <begin position="33"/>
        <end position="37"/>
    </location>
</feature>
<feature type="strand" evidence="2">
    <location>
        <begin position="41"/>
        <end position="45"/>
    </location>
</feature>
<feature type="helix" evidence="2">
    <location>
        <begin position="51"/>
        <end position="65"/>
    </location>
</feature>
<feature type="helix" evidence="2">
    <location>
        <begin position="68"/>
        <end position="74"/>
    </location>
</feature>
<feature type="strand" evidence="2">
    <location>
        <begin position="76"/>
        <end position="87"/>
    </location>
</feature>
<feature type="strand" evidence="2">
    <location>
        <begin position="92"/>
        <end position="96"/>
    </location>
</feature>
<feature type="strand" evidence="2">
    <location>
        <begin position="100"/>
        <end position="104"/>
    </location>
</feature>
<feature type="strand" evidence="2">
    <location>
        <begin position="107"/>
        <end position="110"/>
    </location>
</feature>
<feature type="strand" evidence="2">
    <location>
        <begin position="113"/>
        <end position="118"/>
    </location>
</feature>
<feature type="helix" evidence="2">
    <location>
        <begin position="122"/>
        <end position="124"/>
    </location>
</feature>
<feature type="strand" evidence="2">
    <location>
        <begin position="125"/>
        <end position="127"/>
    </location>
</feature>
<feature type="strand" evidence="2">
    <location>
        <begin position="130"/>
        <end position="134"/>
    </location>
</feature>
<feature type="strand" evidence="2">
    <location>
        <begin position="137"/>
        <end position="141"/>
    </location>
</feature>
<feature type="strand" evidence="2">
    <location>
        <begin position="148"/>
        <end position="152"/>
    </location>
</feature>
<feature type="strand" evidence="2">
    <location>
        <begin position="155"/>
        <end position="159"/>
    </location>
</feature>
<feature type="strand" evidence="2">
    <location>
        <begin position="162"/>
        <end position="165"/>
    </location>
</feature>
<feature type="strand" evidence="2">
    <location>
        <begin position="167"/>
        <end position="177"/>
    </location>
</feature>
<feature type="helix" evidence="2">
    <location>
        <begin position="181"/>
        <end position="199"/>
    </location>
</feature>
<feature type="helix" evidence="2">
    <location>
        <begin position="204"/>
        <end position="221"/>
    </location>
</feature>
<accession>A3D8P6</accession>
<keyword id="KW-0002">3D-structure</keyword>
<keyword id="KW-0223">Dioxygenase</keyword>
<keyword id="KW-0408">Iron</keyword>
<keyword id="KW-0479">Metal-binding</keyword>
<keyword id="KW-0560">Oxidoreductase</keyword>
<keyword id="KW-1185">Reference proteome</keyword>
<keyword id="KW-0847">Vitamin C</keyword>
<protein>
    <recommendedName>
        <fullName evidence="1">PKHD-type hydroxylase Sbal_3634</fullName>
        <ecNumber evidence="1">1.14.11.-</ecNumber>
    </recommendedName>
</protein>
<dbReference type="EC" id="1.14.11.-" evidence="1"/>
<dbReference type="EMBL" id="CP000563">
    <property type="protein sequence ID" value="ABN63109.1"/>
    <property type="molecule type" value="Genomic_DNA"/>
</dbReference>
<dbReference type="RefSeq" id="WP_011847807.1">
    <property type="nucleotide sequence ID" value="NC_009052.1"/>
</dbReference>
<dbReference type="PDB" id="3DKQ">
    <property type="method" value="X-ray"/>
    <property type="resolution" value="2.26 A"/>
    <property type="chains" value="A/B/C=1-224"/>
</dbReference>
<dbReference type="PDBsum" id="3DKQ"/>
<dbReference type="SMR" id="A3D8P6"/>
<dbReference type="STRING" id="325240.Sbal_3634"/>
<dbReference type="KEGG" id="sbl:Sbal_3634"/>
<dbReference type="HOGENOM" id="CLU_106663_0_0_6"/>
<dbReference type="OrthoDB" id="9812472at2"/>
<dbReference type="EvolutionaryTrace" id="A3D8P6"/>
<dbReference type="Proteomes" id="UP000001557">
    <property type="component" value="Chromosome"/>
</dbReference>
<dbReference type="GO" id="GO:0016706">
    <property type="term" value="F:2-oxoglutarate-dependent dioxygenase activity"/>
    <property type="evidence" value="ECO:0007669"/>
    <property type="project" value="UniProtKB-UniRule"/>
</dbReference>
<dbReference type="GO" id="GO:0005506">
    <property type="term" value="F:iron ion binding"/>
    <property type="evidence" value="ECO:0007669"/>
    <property type="project" value="UniProtKB-UniRule"/>
</dbReference>
<dbReference type="GO" id="GO:0031418">
    <property type="term" value="F:L-ascorbic acid binding"/>
    <property type="evidence" value="ECO:0007669"/>
    <property type="project" value="UniProtKB-KW"/>
</dbReference>
<dbReference type="GO" id="GO:0006974">
    <property type="term" value="P:DNA damage response"/>
    <property type="evidence" value="ECO:0007669"/>
    <property type="project" value="TreeGrafter"/>
</dbReference>
<dbReference type="GO" id="GO:0006879">
    <property type="term" value="P:intracellular iron ion homeostasis"/>
    <property type="evidence" value="ECO:0007669"/>
    <property type="project" value="TreeGrafter"/>
</dbReference>
<dbReference type="FunFam" id="2.60.120.620:FF:000006">
    <property type="entry name" value="PKHD-type hydroxylase YbiX"/>
    <property type="match status" value="1"/>
</dbReference>
<dbReference type="Gene3D" id="2.60.120.620">
    <property type="entry name" value="q2cbj1_9rhob like domain"/>
    <property type="match status" value="1"/>
</dbReference>
<dbReference type="Gene3D" id="4.10.860.20">
    <property type="entry name" value="Rabenosyn, Rab binding domain"/>
    <property type="match status" value="1"/>
</dbReference>
<dbReference type="HAMAP" id="MF_00657">
    <property type="entry name" value="Hydroxyl_YbiX"/>
    <property type="match status" value="1"/>
</dbReference>
<dbReference type="InterPro" id="IPR005123">
    <property type="entry name" value="Oxoglu/Fe-dep_dioxygenase_dom"/>
</dbReference>
<dbReference type="InterPro" id="IPR041097">
    <property type="entry name" value="PKHD_C"/>
</dbReference>
<dbReference type="InterPro" id="IPR023550">
    <property type="entry name" value="PKHD_hydroxylase"/>
</dbReference>
<dbReference type="InterPro" id="IPR006620">
    <property type="entry name" value="Pro_4_hyd_alph"/>
</dbReference>
<dbReference type="InterPro" id="IPR044862">
    <property type="entry name" value="Pro_4_hyd_alph_FE2OG_OXY"/>
</dbReference>
<dbReference type="NCBIfam" id="NF003974">
    <property type="entry name" value="PRK05467.1-3"/>
    <property type="match status" value="1"/>
</dbReference>
<dbReference type="NCBIfam" id="NF003975">
    <property type="entry name" value="PRK05467.1-4"/>
    <property type="match status" value="1"/>
</dbReference>
<dbReference type="PANTHER" id="PTHR41536">
    <property type="entry name" value="PKHD-TYPE HYDROXYLASE YBIX"/>
    <property type="match status" value="1"/>
</dbReference>
<dbReference type="PANTHER" id="PTHR41536:SF1">
    <property type="entry name" value="PKHD-TYPE HYDROXYLASE YBIX"/>
    <property type="match status" value="1"/>
</dbReference>
<dbReference type="Pfam" id="PF13640">
    <property type="entry name" value="2OG-FeII_Oxy_3"/>
    <property type="match status" value="1"/>
</dbReference>
<dbReference type="Pfam" id="PF18331">
    <property type="entry name" value="PKHD_C"/>
    <property type="match status" value="1"/>
</dbReference>
<dbReference type="SMART" id="SM00702">
    <property type="entry name" value="P4Hc"/>
    <property type="match status" value="1"/>
</dbReference>
<dbReference type="SUPFAM" id="SSF51197">
    <property type="entry name" value="Clavaminate synthase-like"/>
    <property type="match status" value="1"/>
</dbReference>
<dbReference type="PROSITE" id="PS51471">
    <property type="entry name" value="FE2OG_OXY"/>
    <property type="match status" value="1"/>
</dbReference>
<comment type="cofactor">
    <cofactor evidence="1">
        <name>Fe(2+)</name>
        <dbReference type="ChEBI" id="CHEBI:29033"/>
    </cofactor>
    <text evidence="1">Binds 1 Fe(2+) ion per subunit.</text>
</comment>
<comment type="cofactor">
    <cofactor evidence="1">
        <name>L-ascorbate</name>
        <dbReference type="ChEBI" id="CHEBI:38290"/>
    </cofactor>
</comment>
<gene>
    <name type="ordered locus">Sbal_3634</name>
</gene>
<sequence length="224" mass="25313">MLIEIPNVFSKQEVSHLREQLDARRWIDGNQTSGAMATTRKRNQQLDKDDPVAVALGQQIMDRLLAHPQFVSAALPLQFYPPLFNRYQGGETFGYHIDNAIRSTPDGMIRTDLSATLFLSEPENYQGGELVIQDTYGQQSIKLSAGSLVLYPSSSLHQVTPVLSGERTAAFMWLQSMVRDEGQRRLLFQLDQSIQSLTAQTAAEQELFNLSGVYHNLLRRWSEL</sequence>
<reference key="1">
    <citation type="submission" date="2007-02" db="EMBL/GenBank/DDBJ databases">
        <title>Complete sequence of chromosome of Shewanella baltica OS155.</title>
        <authorList>
            <consortium name="US DOE Joint Genome Institute"/>
            <person name="Copeland A."/>
            <person name="Lucas S."/>
            <person name="Lapidus A."/>
            <person name="Barry K."/>
            <person name="Detter J.C."/>
            <person name="Glavina del Rio T."/>
            <person name="Hammon N."/>
            <person name="Israni S."/>
            <person name="Dalin E."/>
            <person name="Tice H."/>
            <person name="Pitluck S."/>
            <person name="Sims D.R."/>
            <person name="Brettin T."/>
            <person name="Bruce D."/>
            <person name="Han C."/>
            <person name="Tapia R."/>
            <person name="Brainard J."/>
            <person name="Schmutz J."/>
            <person name="Larimer F."/>
            <person name="Land M."/>
            <person name="Hauser L."/>
            <person name="Kyrpides N."/>
            <person name="Mikhailova N."/>
            <person name="Brettar I."/>
            <person name="Klappenbach J."/>
            <person name="Konstantinidis K."/>
            <person name="Rodrigues J."/>
            <person name="Tiedje J."/>
            <person name="Richardson P."/>
        </authorList>
    </citation>
    <scope>NUCLEOTIDE SEQUENCE [LARGE SCALE GENOMIC DNA]</scope>
    <source>
        <strain>OS155 / ATCC BAA-1091</strain>
    </source>
</reference>
<evidence type="ECO:0000255" key="1">
    <source>
        <dbReference type="HAMAP-Rule" id="MF_00657"/>
    </source>
</evidence>
<evidence type="ECO:0007829" key="2">
    <source>
        <dbReference type="PDB" id="3DKQ"/>
    </source>
</evidence>
<organism>
    <name type="scientific">Shewanella baltica (strain OS155 / ATCC BAA-1091)</name>
    <dbReference type="NCBI Taxonomy" id="325240"/>
    <lineage>
        <taxon>Bacteria</taxon>
        <taxon>Pseudomonadati</taxon>
        <taxon>Pseudomonadota</taxon>
        <taxon>Gammaproteobacteria</taxon>
        <taxon>Alteromonadales</taxon>
        <taxon>Shewanellaceae</taxon>
        <taxon>Shewanella</taxon>
    </lineage>
</organism>
<proteinExistence type="evidence at protein level"/>